<name>GLMU_RHILW</name>
<feature type="chain" id="PRO_1000186476" description="Bifunctional protein GlmU">
    <location>
        <begin position="1"/>
        <end position="453"/>
    </location>
</feature>
<feature type="region of interest" description="Pyrophosphorylase" evidence="1">
    <location>
        <begin position="1"/>
        <end position="231"/>
    </location>
</feature>
<feature type="region of interest" description="Linker" evidence="1">
    <location>
        <begin position="232"/>
        <end position="252"/>
    </location>
</feature>
<feature type="region of interest" description="N-acetyltransferase" evidence="1">
    <location>
        <begin position="253"/>
        <end position="453"/>
    </location>
</feature>
<feature type="active site" description="Proton acceptor" evidence="1">
    <location>
        <position position="348"/>
    </location>
</feature>
<feature type="binding site" evidence="1">
    <location>
        <begin position="10"/>
        <end position="13"/>
    </location>
    <ligand>
        <name>UDP-N-acetyl-alpha-D-glucosamine</name>
        <dbReference type="ChEBI" id="CHEBI:57705"/>
    </ligand>
</feature>
<feature type="binding site" evidence="1">
    <location>
        <position position="24"/>
    </location>
    <ligand>
        <name>UDP-N-acetyl-alpha-D-glucosamine</name>
        <dbReference type="ChEBI" id="CHEBI:57705"/>
    </ligand>
</feature>
<feature type="binding site" evidence="1">
    <location>
        <position position="77"/>
    </location>
    <ligand>
        <name>UDP-N-acetyl-alpha-D-glucosamine</name>
        <dbReference type="ChEBI" id="CHEBI:57705"/>
    </ligand>
</feature>
<feature type="binding site" evidence="1">
    <location>
        <begin position="82"/>
        <end position="83"/>
    </location>
    <ligand>
        <name>UDP-N-acetyl-alpha-D-glucosamine</name>
        <dbReference type="ChEBI" id="CHEBI:57705"/>
    </ligand>
</feature>
<feature type="binding site" evidence="1">
    <location>
        <begin position="105"/>
        <end position="107"/>
    </location>
    <ligand>
        <name>UDP-N-acetyl-alpha-D-glucosamine</name>
        <dbReference type="ChEBI" id="CHEBI:57705"/>
    </ligand>
</feature>
<feature type="binding site" evidence="1">
    <location>
        <position position="107"/>
    </location>
    <ligand>
        <name>Mg(2+)</name>
        <dbReference type="ChEBI" id="CHEBI:18420"/>
    </ligand>
</feature>
<feature type="binding site" evidence="1">
    <location>
        <position position="143"/>
    </location>
    <ligand>
        <name>UDP-N-acetyl-alpha-D-glucosamine</name>
        <dbReference type="ChEBI" id="CHEBI:57705"/>
    </ligand>
</feature>
<feature type="binding site" evidence="1">
    <location>
        <position position="157"/>
    </location>
    <ligand>
        <name>UDP-N-acetyl-alpha-D-glucosamine</name>
        <dbReference type="ChEBI" id="CHEBI:57705"/>
    </ligand>
</feature>
<feature type="binding site" evidence="1">
    <location>
        <position position="172"/>
    </location>
    <ligand>
        <name>UDP-N-acetyl-alpha-D-glucosamine</name>
        <dbReference type="ChEBI" id="CHEBI:57705"/>
    </ligand>
</feature>
<feature type="binding site" evidence="1">
    <location>
        <position position="229"/>
    </location>
    <ligand>
        <name>Mg(2+)</name>
        <dbReference type="ChEBI" id="CHEBI:18420"/>
    </ligand>
</feature>
<feature type="binding site" evidence="1">
    <location>
        <position position="229"/>
    </location>
    <ligand>
        <name>UDP-N-acetyl-alpha-D-glucosamine</name>
        <dbReference type="ChEBI" id="CHEBI:57705"/>
    </ligand>
</feature>
<feature type="binding site" evidence="1">
    <location>
        <position position="318"/>
    </location>
    <ligand>
        <name>UDP-N-acetyl-alpha-D-glucosamine</name>
        <dbReference type="ChEBI" id="CHEBI:57705"/>
    </ligand>
</feature>
<feature type="binding site" evidence="1">
    <location>
        <position position="336"/>
    </location>
    <ligand>
        <name>UDP-N-acetyl-alpha-D-glucosamine</name>
        <dbReference type="ChEBI" id="CHEBI:57705"/>
    </ligand>
</feature>
<feature type="binding site" evidence="1">
    <location>
        <position position="351"/>
    </location>
    <ligand>
        <name>UDP-N-acetyl-alpha-D-glucosamine</name>
        <dbReference type="ChEBI" id="CHEBI:57705"/>
    </ligand>
</feature>
<feature type="binding site" evidence="1">
    <location>
        <position position="362"/>
    </location>
    <ligand>
        <name>UDP-N-acetyl-alpha-D-glucosamine</name>
        <dbReference type="ChEBI" id="CHEBI:57705"/>
    </ligand>
</feature>
<feature type="binding site" evidence="1">
    <location>
        <position position="365"/>
    </location>
    <ligand>
        <name>acetyl-CoA</name>
        <dbReference type="ChEBI" id="CHEBI:57288"/>
    </ligand>
</feature>
<feature type="binding site" evidence="1">
    <location>
        <begin position="371"/>
        <end position="372"/>
    </location>
    <ligand>
        <name>acetyl-CoA</name>
        <dbReference type="ChEBI" id="CHEBI:57288"/>
    </ligand>
</feature>
<feature type="binding site" evidence="1">
    <location>
        <position position="390"/>
    </location>
    <ligand>
        <name>acetyl-CoA</name>
        <dbReference type="ChEBI" id="CHEBI:57288"/>
    </ligand>
</feature>
<feature type="binding site" evidence="1">
    <location>
        <position position="408"/>
    </location>
    <ligand>
        <name>acetyl-CoA</name>
        <dbReference type="ChEBI" id="CHEBI:57288"/>
    </ligand>
</feature>
<feature type="binding site" evidence="1">
    <location>
        <position position="425"/>
    </location>
    <ligand>
        <name>acetyl-CoA</name>
        <dbReference type="ChEBI" id="CHEBI:57288"/>
    </ligand>
</feature>
<proteinExistence type="inferred from homology"/>
<dbReference type="EC" id="2.7.7.23" evidence="1"/>
<dbReference type="EC" id="2.3.1.157" evidence="1"/>
<dbReference type="EMBL" id="CP001191">
    <property type="protein sequence ID" value="ACI55012.1"/>
    <property type="molecule type" value="Genomic_DNA"/>
</dbReference>
<dbReference type="RefSeq" id="WP_012557651.1">
    <property type="nucleotide sequence ID" value="NC_011369.1"/>
</dbReference>
<dbReference type="SMR" id="B5ZP51"/>
<dbReference type="STRING" id="395492.Rleg2_1725"/>
<dbReference type="KEGG" id="rlt:Rleg2_1725"/>
<dbReference type="eggNOG" id="COG1207">
    <property type="taxonomic scope" value="Bacteria"/>
</dbReference>
<dbReference type="HOGENOM" id="CLU_029499_15_2_5"/>
<dbReference type="UniPathway" id="UPA00113">
    <property type="reaction ID" value="UER00532"/>
</dbReference>
<dbReference type="UniPathway" id="UPA00113">
    <property type="reaction ID" value="UER00533"/>
</dbReference>
<dbReference type="UniPathway" id="UPA00973"/>
<dbReference type="Proteomes" id="UP000008330">
    <property type="component" value="Chromosome"/>
</dbReference>
<dbReference type="GO" id="GO:0005737">
    <property type="term" value="C:cytoplasm"/>
    <property type="evidence" value="ECO:0007669"/>
    <property type="project" value="UniProtKB-SubCell"/>
</dbReference>
<dbReference type="GO" id="GO:0016020">
    <property type="term" value="C:membrane"/>
    <property type="evidence" value="ECO:0007669"/>
    <property type="project" value="GOC"/>
</dbReference>
<dbReference type="GO" id="GO:0019134">
    <property type="term" value="F:glucosamine-1-phosphate N-acetyltransferase activity"/>
    <property type="evidence" value="ECO:0007669"/>
    <property type="project" value="UniProtKB-UniRule"/>
</dbReference>
<dbReference type="GO" id="GO:0000287">
    <property type="term" value="F:magnesium ion binding"/>
    <property type="evidence" value="ECO:0007669"/>
    <property type="project" value="UniProtKB-UniRule"/>
</dbReference>
<dbReference type="GO" id="GO:0003977">
    <property type="term" value="F:UDP-N-acetylglucosamine diphosphorylase activity"/>
    <property type="evidence" value="ECO:0007669"/>
    <property type="project" value="UniProtKB-UniRule"/>
</dbReference>
<dbReference type="GO" id="GO:0000902">
    <property type="term" value="P:cell morphogenesis"/>
    <property type="evidence" value="ECO:0007669"/>
    <property type="project" value="UniProtKB-UniRule"/>
</dbReference>
<dbReference type="GO" id="GO:0071555">
    <property type="term" value="P:cell wall organization"/>
    <property type="evidence" value="ECO:0007669"/>
    <property type="project" value="UniProtKB-KW"/>
</dbReference>
<dbReference type="GO" id="GO:0009245">
    <property type="term" value="P:lipid A biosynthetic process"/>
    <property type="evidence" value="ECO:0007669"/>
    <property type="project" value="UniProtKB-UniRule"/>
</dbReference>
<dbReference type="GO" id="GO:0009252">
    <property type="term" value="P:peptidoglycan biosynthetic process"/>
    <property type="evidence" value="ECO:0007669"/>
    <property type="project" value="UniProtKB-UniRule"/>
</dbReference>
<dbReference type="GO" id="GO:0008360">
    <property type="term" value="P:regulation of cell shape"/>
    <property type="evidence" value="ECO:0007669"/>
    <property type="project" value="UniProtKB-KW"/>
</dbReference>
<dbReference type="GO" id="GO:0006048">
    <property type="term" value="P:UDP-N-acetylglucosamine biosynthetic process"/>
    <property type="evidence" value="ECO:0007669"/>
    <property type="project" value="UniProtKB-UniPathway"/>
</dbReference>
<dbReference type="CDD" id="cd02540">
    <property type="entry name" value="GT2_GlmU_N_bac"/>
    <property type="match status" value="1"/>
</dbReference>
<dbReference type="CDD" id="cd03353">
    <property type="entry name" value="LbH_GlmU_C"/>
    <property type="match status" value="1"/>
</dbReference>
<dbReference type="Gene3D" id="2.160.10.10">
    <property type="entry name" value="Hexapeptide repeat proteins"/>
    <property type="match status" value="1"/>
</dbReference>
<dbReference type="Gene3D" id="3.90.550.10">
    <property type="entry name" value="Spore Coat Polysaccharide Biosynthesis Protein SpsA, Chain A"/>
    <property type="match status" value="1"/>
</dbReference>
<dbReference type="HAMAP" id="MF_01631">
    <property type="entry name" value="GlmU"/>
    <property type="match status" value="1"/>
</dbReference>
<dbReference type="InterPro" id="IPR005882">
    <property type="entry name" value="Bifunctional_GlmU"/>
</dbReference>
<dbReference type="InterPro" id="IPR050065">
    <property type="entry name" value="GlmU-like"/>
</dbReference>
<dbReference type="InterPro" id="IPR038009">
    <property type="entry name" value="GlmU_C_LbH"/>
</dbReference>
<dbReference type="InterPro" id="IPR001451">
    <property type="entry name" value="Hexapep"/>
</dbReference>
<dbReference type="InterPro" id="IPR018357">
    <property type="entry name" value="Hexapep_transf_CS"/>
</dbReference>
<dbReference type="InterPro" id="IPR025877">
    <property type="entry name" value="MobA-like_NTP_Trfase"/>
</dbReference>
<dbReference type="InterPro" id="IPR029044">
    <property type="entry name" value="Nucleotide-diphossugar_trans"/>
</dbReference>
<dbReference type="InterPro" id="IPR011004">
    <property type="entry name" value="Trimer_LpxA-like_sf"/>
</dbReference>
<dbReference type="NCBIfam" id="TIGR01173">
    <property type="entry name" value="glmU"/>
    <property type="match status" value="1"/>
</dbReference>
<dbReference type="NCBIfam" id="NF010933">
    <property type="entry name" value="PRK14353.1"/>
    <property type="match status" value="1"/>
</dbReference>
<dbReference type="PANTHER" id="PTHR43584:SF3">
    <property type="entry name" value="BIFUNCTIONAL PROTEIN GLMU"/>
    <property type="match status" value="1"/>
</dbReference>
<dbReference type="PANTHER" id="PTHR43584">
    <property type="entry name" value="NUCLEOTIDYL TRANSFERASE"/>
    <property type="match status" value="1"/>
</dbReference>
<dbReference type="Pfam" id="PF00132">
    <property type="entry name" value="Hexapep"/>
    <property type="match status" value="2"/>
</dbReference>
<dbReference type="Pfam" id="PF12804">
    <property type="entry name" value="NTP_transf_3"/>
    <property type="match status" value="1"/>
</dbReference>
<dbReference type="SUPFAM" id="SSF53448">
    <property type="entry name" value="Nucleotide-diphospho-sugar transferases"/>
    <property type="match status" value="1"/>
</dbReference>
<dbReference type="SUPFAM" id="SSF51161">
    <property type="entry name" value="Trimeric LpxA-like enzymes"/>
    <property type="match status" value="1"/>
</dbReference>
<dbReference type="PROSITE" id="PS00101">
    <property type="entry name" value="HEXAPEP_TRANSFERASES"/>
    <property type="match status" value="1"/>
</dbReference>
<gene>
    <name evidence="1" type="primary">glmU</name>
    <name type="ordered locus">Rleg2_1725</name>
</gene>
<organism>
    <name type="scientific">Rhizobium leguminosarum bv. trifolii (strain WSM2304)</name>
    <dbReference type="NCBI Taxonomy" id="395492"/>
    <lineage>
        <taxon>Bacteria</taxon>
        <taxon>Pseudomonadati</taxon>
        <taxon>Pseudomonadota</taxon>
        <taxon>Alphaproteobacteria</taxon>
        <taxon>Hyphomicrobiales</taxon>
        <taxon>Rhizobiaceae</taxon>
        <taxon>Rhizobium/Agrobacterium group</taxon>
        <taxon>Rhizobium</taxon>
    </lineage>
</organism>
<reference key="1">
    <citation type="journal article" date="2010" name="Stand. Genomic Sci.">
        <title>Complete genome sequence of Rhizobium leguminosarum bv trifolii strain WSM2304, an effective microsymbiont of the South American clover Trifolium polymorphum.</title>
        <authorList>
            <person name="Reeve W."/>
            <person name="O'Hara G."/>
            <person name="Chain P."/>
            <person name="Ardley J."/>
            <person name="Brau L."/>
            <person name="Nandesena K."/>
            <person name="Tiwari R."/>
            <person name="Malfatti S."/>
            <person name="Kiss H."/>
            <person name="Lapidus A."/>
            <person name="Copeland A."/>
            <person name="Nolan M."/>
            <person name="Land M."/>
            <person name="Ivanova N."/>
            <person name="Mavromatis K."/>
            <person name="Markowitz V."/>
            <person name="Kyrpides N."/>
            <person name="Melino V."/>
            <person name="Denton M."/>
            <person name="Yates R."/>
            <person name="Howieson J."/>
        </authorList>
    </citation>
    <scope>NUCLEOTIDE SEQUENCE [LARGE SCALE GENOMIC DNA]</scope>
    <source>
        <strain>WSM2304</strain>
    </source>
</reference>
<evidence type="ECO:0000255" key="1">
    <source>
        <dbReference type="HAMAP-Rule" id="MF_01631"/>
    </source>
</evidence>
<keyword id="KW-0012">Acyltransferase</keyword>
<keyword id="KW-0133">Cell shape</keyword>
<keyword id="KW-0961">Cell wall biogenesis/degradation</keyword>
<keyword id="KW-0963">Cytoplasm</keyword>
<keyword id="KW-0460">Magnesium</keyword>
<keyword id="KW-0479">Metal-binding</keyword>
<keyword id="KW-0511">Multifunctional enzyme</keyword>
<keyword id="KW-0548">Nucleotidyltransferase</keyword>
<keyword id="KW-0573">Peptidoglycan synthesis</keyword>
<keyword id="KW-1185">Reference proteome</keyword>
<keyword id="KW-0677">Repeat</keyword>
<keyword id="KW-0808">Transferase</keyword>
<protein>
    <recommendedName>
        <fullName evidence="1">Bifunctional protein GlmU</fullName>
    </recommendedName>
    <domain>
        <recommendedName>
            <fullName evidence="1">UDP-N-acetylglucosamine pyrophosphorylase</fullName>
            <ecNumber evidence="1">2.7.7.23</ecNumber>
        </recommendedName>
        <alternativeName>
            <fullName evidence="1">N-acetylglucosamine-1-phosphate uridyltransferase</fullName>
        </alternativeName>
    </domain>
    <domain>
        <recommendedName>
            <fullName evidence="1">Glucosamine-1-phosphate N-acetyltransferase</fullName>
            <ecNumber evidence="1">2.3.1.157</ecNumber>
        </recommendedName>
    </domain>
</protein>
<comment type="function">
    <text evidence="1">Catalyzes the last two sequential reactions in the de novo biosynthetic pathway for UDP-N-acetylglucosamine (UDP-GlcNAc). The C-terminal domain catalyzes the transfer of acetyl group from acetyl coenzyme A to glucosamine-1-phosphate (GlcN-1-P) to produce N-acetylglucosamine-1-phosphate (GlcNAc-1-P), which is converted into UDP-GlcNAc by the transfer of uridine 5-monophosphate (from uridine 5-triphosphate), a reaction catalyzed by the N-terminal domain.</text>
</comment>
<comment type="catalytic activity">
    <reaction evidence="1">
        <text>alpha-D-glucosamine 1-phosphate + acetyl-CoA = N-acetyl-alpha-D-glucosamine 1-phosphate + CoA + H(+)</text>
        <dbReference type="Rhea" id="RHEA:13725"/>
        <dbReference type="ChEBI" id="CHEBI:15378"/>
        <dbReference type="ChEBI" id="CHEBI:57287"/>
        <dbReference type="ChEBI" id="CHEBI:57288"/>
        <dbReference type="ChEBI" id="CHEBI:57776"/>
        <dbReference type="ChEBI" id="CHEBI:58516"/>
        <dbReference type="EC" id="2.3.1.157"/>
    </reaction>
</comment>
<comment type="catalytic activity">
    <reaction evidence="1">
        <text>N-acetyl-alpha-D-glucosamine 1-phosphate + UTP + H(+) = UDP-N-acetyl-alpha-D-glucosamine + diphosphate</text>
        <dbReference type="Rhea" id="RHEA:13509"/>
        <dbReference type="ChEBI" id="CHEBI:15378"/>
        <dbReference type="ChEBI" id="CHEBI:33019"/>
        <dbReference type="ChEBI" id="CHEBI:46398"/>
        <dbReference type="ChEBI" id="CHEBI:57705"/>
        <dbReference type="ChEBI" id="CHEBI:57776"/>
        <dbReference type="EC" id="2.7.7.23"/>
    </reaction>
</comment>
<comment type="cofactor">
    <cofactor evidence="1">
        <name>Mg(2+)</name>
        <dbReference type="ChEBI" id="CHEBI:18420"/>
    </cofactor>
    <text evidence="1">Binds 1 Mg(2+) ion per subunit.</text>
</comment>
<comment type="pathway">
    <text evidence="1">Nucleotide-sugar biosynthesis; UDP-N-acetyl-alpha-D-glucosamine biosynthesis; N-acetyl-alpha-D-glucosamine 1-phosphate from alpha-D-glucosamine 6-phosphate (route II): step 2/2.</text>
</comment>
<comment type="pathway">
    <text evidence="1">Nucleotide-sugar biosynthesis; UDP-N-acetyl-alpha-D-glucosamine biosynthesis; UDP-N-acetyl-alpha-D-glucosamine from N-acetyl-alpha-D-glucosamine 1-phosphate: step 1/1.</text>
</comment>
<comment type="pathway">
    <text evidence="1">Bacterial outer membrane biogenesis; LPS lipid A biosynthesis.</text>
</comment>
<comment type="subunit">
    <text evidence="1">Homotrimer.</text>
</comment>
<comment type="subcellular location">
    <subcellularLocation>
        <location evidence="1">Cytoplasm</location>
    </subcellularLocation>
</comment>
<comment type="similarity">
    <text evidence="1">In the N-terminal section; belongs to the N-acetylglucosamine-1-phosphate uridyltransferase family.</text>
</comment>
<comment type="similarity">
    <text evidence="1">In the C-terminal section; belongs to the transferase hexapeptide repeat family.</text>
</comment>
<sequence>MERTCLAVILAAGDSTRMKSSKSKVLHPVAGRPMIAHVVEAVASAGISSVALVVGRDAEEVAKAASIAGVGIEACLQKERLGTGHAVLAAREAIAKGYDDILVTYGDVPLQTDGPLKAARQGLADGSDIVVIGFHTDRPTGYGRLLVKDGELIAIREEKDATDAERTVTWCNSGLMAINGRKALDLLQRIGNANAKGEFYLTDLVEIARSLGGRVTAVDAPEIEMTGCNTRAELAVIERFWQERRRHQLMLSGVTMIAPETVFLSYDTVIGQDALIEPNVVFGPGAVIDSGAVIHAFSHIEGAHVSQGATVGPFARLRPGADLGNGSKVGNFCEVKNGRIGEGAKVNHLTYIGDAVIGAGSNIGAGTITCNYDGVNKSETVIGENAFIGSNSSLVAPVTIGDGAYIASGSVITADVPADALALGRARQEIKPGRASLLRERALATKAAKKAKG</sequence>
<accession>B5ZP51</accession>